<dbReference type="EC" id="3.6.1.23" evidence="1"/>
<dbReference type="EMBL" id="CP000050">
    <property type="protein sequence ID" value="AAY50981.1"/>
    <property type="molecule type" value="Genomic_DNA"/>
</dbReference>
<dbReference type="SMR" id="Q4UPP2"/>
<dbReference type="KEGG" id="xcb:XC_3942"/>
<dbReference type="HOGENOM" id="CLU_068508_1_1_6"/>
<dbReference type="UniPathway" id="UPA00610">
    <property type="reaction ID" value="UER00666"/>
</dbReference>
<dbReference type="Proteomes" id="UP000000420">
    <property type="component" value="Chromosome"/>
</dbReference>
<dbReference type="GO" id="GO:0004170">
    <property type="term" value="F:dUTP diphosphatase activity"/>
    <property type="evidence" value="ECO:0007669"/>
    <property type="project" value="UniProtKB-UniRule"/>
</dbReference>
<dbReference type="GO" id="GO:0000287">
    <property type="term" value="F:magnesium ion binding"/>
    <property type="evidence" value="ECO:0007669"/>
    <property type="project" value="UniProtKB-UniRule"/>
</dbReference>
<dbReference type="GO" id="GO:0006226">
    <property type="term" value="P:dUMP biosynthetic process"/>
    <property type="evidence" value="ECO:0007669"/>
    <property type="project" value="UniProtKB-UniRule"/>
</dbReference>
<dbReference type="GO" id="GO:0046081">
    <property type="term" value="P:dUTP catabolic process"/>
    <property type="evidence" value="ECO:0007669"/>
    <property type="project" value="InterPro"/>
</dbReference>
<dbReference type="CDD" id="cd07557">
    <property type="entry name" value="trimeric_dUTPase"/>
    <property type="match status" value="1"/>
</dbReference>
<dbReference type="FunFam" id="2.70.40.10:FF:000002">
    <property type="entry name" value="dUTP diphosphatase"/>
    <property type="match status" value="1"/>
</dbReference>
<dbReference type="Gene3D" id="2.70.40.10">
    <property type="match status" value="1"/>
</dbReference>
<dbReference type="HAMAP" id="MF_00116">
    <property type="entry name" value="dUTPase_bact"/>
    <property type="match status" value="1"/>
</dbReference>
<dbReference type="InterPro" id="IPR008181">
    <property type="entry name" value="dUTPase"/>
</dbReference>
<dbReference type="InterPro" id="IPR029054">
    <property type="entry name" value="dUTPase-like"/>
</dbReference>
<dbReference type="InterPro" id="IPR036157">
    <property type="entry name" value="dUTPase-like_sf"/>
</dbReference>
<dbReference type="InterPro" id="IPR033704">
    <property type="entry name" value="dUTPase_trimeric"/>
</dbReference>
<dbReference type="NCBIfam" id="TIGR00576">
    <property type="entry name" value="dut"/>
    <property type="match status" value="1"/>
</dbReference>
<dbReference type="NCBIfam" id="NF001862">
    <property type="entry name" value="PRK00601.1"/>
    <property type="match status" value="1"/>
</dbReference>
<dbReference type="PANTHER" id="PTHR11241">
    <property type="entry name" value="DEOXYURIDINE 5'-TRIPHOSPHATE NUCLEOTIDOHYDROLASE"/>
    <property type="match status" value="1"/>
</dbReference>
<dbReference type="PANTHER" id="PTHR11241:SF0">
    <property type="entry name" value="DEOXYURIDINE 5'-TRIPHOSPHATE NUCLEOTIDOHYDROLASE"/>
    <property type="match status" value="1"/>
</dbReference>
<dbReference type="Pfam" id="PF00692">
    <property type="entry name" value="dUTPase"/>
    <property type="match status" value="1"/>
</dbReference>
<dbReference type="SUPFAM" id="SSF51283">
    <property type="entry name" value="dUTPase-like"/>
    <property type="match status" value="1"/>
</dbReference>
<sequence>MTQSLQVKLLDPRFGDLWPLPAYATEASAGMDLRAALEAPMTLEPGDAALIPSGIAIHLDDPQVCAVILPRSGLGHRHGIVLGNGTGLIDADYQGPLLISTWNRGREAFTIEPGDRIAQLVILPIVRVSLQVVDTFVDSARGAGGFGHTGVR</sequence>
<comment type="function">
    <text evidence="1">This enzyme is involved in nucleotide metabolism: it produces dUMP, the immediate precursor of thymidine nucleotides and it decreases the intracellular concentration of dUTP so that uracil cannot be incorporated into DNA.</text>
</comment>
<comment type="catalytic activity">
    <reaction evidence="1">
        <text>dUTP + H2O = dUMP + diphosphate + H(+)</text>
        <dbReference type="Rhea" id="RHEA:10248"/>
        <dbReference type="ChEBI" id="CHEBI:15377"/>
        <dbReference type="ChEBI" id="CHEBI:15378"/>
        <dbReference type="ChEBI" id="CHEBI:33019"/>
        <dbReference type="ChEBI" id="CHEBI:61555"/>
        <dbReference type="ChEBI" id="CHEBI:246422"/>
        <dbReference type="EC" id="3.6.1.23"/>
    </reaction>
</comment>
<comment type="cofactor">
    <cofactor evidence="1">
        <name>Mg(2+)</name>
        <dbReference type="ChEBI" id="CHEBI:18420"/>
    </cofactor>
</comment>
<comment type="pathway">
    <text evidence="1">Pyrimidine metabolism; dUMP biosynthesis; dUMP from dCTP (dUTP route): step 2/2.</text>
</comment>
<comment type="similarity">
    <text evidence="1">Belongs to the dUTPase family.</text>
</comment>
<evidence type="ECO:0000255" key="1">
    <source>
        <dbReference type="HAMAP-Rule" id="MF_00116"/>
    </source>
</evidence>
<accession>Q4UPP2</accession>
<proteinExistence type="inferred from homology"/>
<keyword id="KW-0378">Hydrolase</keyword>
<keyword id="KW-0460">Magnesium</keyword>
<keyword id="KW-0479">Metal-binding</keyword>
<keyword id="KW-0546">Nucleotide metabolism</keyword>
<name>DUT_XANC8</name>
<feature type="chain" id="PRO_0000231436" description="Deoxyuridine 5'-triphosphate nucleotidohydrolase">
    <location>
        <begin position="1"/>
        <end position="152"/>
    </location>
</feature>
<feature type="binding site" evidence="1">
    <location>
        <begin position="71"/>
        <end position="73"/>
    </location>
    <ligand>
        <name>substrate</name>
    </ligand>
</feature>
<feature type="binding site" evidence="1">
    <location>
        <position position="84"/>
    </location>
    <ligand>
        <name>substrate</name>
    </ligand>
</feature>
<feature type="binding site" evidence="1">
    <location>
        <begin position="88"/>
        <end position="90"/>
    </location>
    <ligand>
        <name>substrate</name>
    </ligand>
</feature>
<protein>
    <recommendedName>
        <fullName evidence="1">Deoxyuridine 5'-triphosphate nucleotidohydrolase</fullName>
        <shortName evidence="1">dUTPase</shortName>
        <ecNumber evidence="1">3.6.1.23</ecNumber>
    </recommendedName>
    <alternativeName>
        <fullName evidence="1">dUTP pyrophosphatase</fullName>
    </alternativeName>
</protein>
<gene>
    <name evidence="1" type="primary">dut</name>
    <name type="ordered locus">XC_3942</name>
</gene>
<organism>
    <name type="scientific">Xanthomonas campestris pv. campestris (strain 8004)</name>
    <dbReference type="NCBI Taxonomy" id="314565"/>
    <lineage>
        <taxon>Bacteria</taxon>
        <taxon>Pseudomonadati</taxon>
        <taxon>Pseudomonadota</taxon>
        <taxon>Gammaproteobacteria</taxon>
        <taxon>Lysobacterales</taxon>
        <taxon>Lysobacteraceae</taxon>
        <taxon>Xanthomonas</taxon>
    </lineage>
</organism>
<reference key="1">
    <citation type="journal article" date="2005" name="Genome Res.">
        <title>Comparative and functional genomic analyses of the pathogenicity of phytopathogen Xanthomonas campestris pv. campestris.</title>
        <authorList>
            <person name="Qian W."/>
            <person name="Jia Y."/>
            <person name="Ren S.-X."/>
            <person name="He Y.-Q."/>
            <person name="Feng J.-X."/>
            <person name="Lu L.-F."/>
            <person name="Sun Q."/>
            <person name="Ying G."/>
            <person name="Tang D.-J."/>
            <person name="Tang H."/>
            <person name="Wu W."/>
            <person name="Hao P."/>
            <person name="Wang L."/>
            <person name="Jiang B.-L."/>
            <person name="Zeng S."/>
            <person name="Gu W.-Y."/>
            <person name="Lu G."/>
            <person name="Rong L."/>
            <person name="Tian Y."/>
            <person name="Yao Z."/>
            <person name="Fu G."/>
            <person name="Chen B."/>
            <person name="Fang R."/>
            <person name="Qiang B."/>
            <person name="Chen Z."/>
            <person name="Zhao G.-P."/>
            <person name="Tang J.-L."/>
            <person name="He C."/>
        </authorList>
    </citation>
    <scope>NUCLEOTIDE SEQUENCE [LARGE SCALE GENOMIC DNA]</scope>
    <source>
        <strain>8004</strain>
    </source>
</reference>